<keyword id="KW-0030">Aminoacyl-tRNA synthetase</keyword>
<keyword id="KW-0067">ATP-binding</keyword>
<keyword id="KW-0963">Cytoplasm</keyword>
<keyword id="KW-0436">Ligase</keyword>
<keyword id="KW-0547">Nucleotide-binding</keyword>
<keyword id="KW-0648">Protein biosynthesis</keyword>
<gene>
    <name evidence="1" type="primary">argS</name>
    <name type="ordered locus">Rsph17025_0902</name>
</gene>
<reference key="1">
    <citation type="submission" date="2007-04" db="EMBL/GenBank/DDBJ databases">
        <title>Complete sequence of chromosome of Rhodobacter sphaeroides ATCC 17025.</title>
        <authorList>
            <consortium name="US DOE Joint Genome Institute"/>
            <person name="Copeland A."/>
            <person name="Lucas S."/>
            <person name="Lapidus A."/>
            <person name="Barry K."/>
            <person name="Detter J.C."/>
            <person name="Glavina del Rio T."/>
            <person name="Hammon N."/>
            <person name="Israni S."/>
            <person name="Dalin E."/>
            <person name="Tice H."/>
            <person name="Pitluck S."/>
            <person name="Chertkov O."/>
            <person name="Brettin T."/>
            <person name="Bruce D."/>
            <person name="Han C."/>
            <person name="Schmutz J."/>
            <person name="Larimer F."/>
            <person name="Land M."/>
            <person name="Hauser L."/>
            <person name="Kyrpides N."/>
            <person name="Kim E."/>
            <person name="Richardson P."/>
            <person name="Mackenzie C."/>
            <person name="Choudhary M."/>
            <person name="Donohue T.J."/>
            <person name="Kaplan S."/>
        </authorList>
    </citation>
    <scope>NUCLEOTIDE SEQUENCE [LARGE SCALE GENOMIC DNA]</scope>
    <source>
        <strain>ATCC 17025 / ATH 2.4.3</strain>
    </source>
</reference>
<evidence type="ECO:0000255" key="1">
    <source>
        <dbReference type="HAMAP-Rule" id="MF_00123"/>
    </source>
</evidence>
<dbReference type="EC" id="6.1.1.19" evidence="1"/>
<dbReference type="EMBL" id="CP000661">
    <property type="protein sequence ID" value="ABP69805.1"/>
    <property type="molecule type" value="Genomic_DNA"/>
</dbReference>
<dbReference type="SMR" id="A4WQZ1"/>
<dbReference type="STRING" id="349102.Rsph17025_0902"/>
<dbReference type="KEGG" id="rsq:Rsph17025_0902"/>
<dbReference type="eggNOG" id="COG0018">
    <property type="taxonomic scope" value="Bacteria"/>
</dbReference>
<dbReference type="HOGENOM" id="CLU_006406_0_1_5"/>
<dbReference type="BioCyc" id="RSPH349102:G1G8M-925-MONOMER"/>
<dbReference type="GO" id="GO:0005737">
    <property type="term" value="C:cytoplasm"/>
    <property type="evidence" value="ECO:0007669"/>
    <property type="project" value="UniProtKB-SubCell"/>
</dbReference>
<dbReference type="GO" id="GO:0004814">
    <property type="term" value="F:arginine-tRNA ligase activity"/>
    <property type="evidence" value="ECO:0007669"/>
    <property type="project" value="UniProtKB-UniRule"/>
</dbReference>
<dbReference type="GO" id="GO:0005524">
    <property type="term" value="F:ATP binding"/>
    <property type="evidence" value="ECO:0007669"/>
    <property type="project" value="UniProtKB-UniRule"/>
</dbReference>
<dbReference type="GO" id="GO:0006420">
    <property type="term" value="P:arginyl-tRNA aminoacylation"/>
    <property type="evidence" value="ECO:0007669"/>
    <property type="project" value="UniProtKB-UniRule"/>
</dbReference>
<dbReference type="CDD" id="cd00671">
    <property type="entry name" value="ArgRS_core"/>
    <property type="match status" value="1"/>
</dbReference>
<dbReference type="FunFam" id="3.40.50.620:FF:000062">
    <property type="entry name" value="Arginine--tRNA ligase"/>
    <property type="match status" value="1"/>
</dbReference>
<dbReference type="Gene3D" id="3.30.1360.70">
    <property type="entry name" value="Arginyl tRNA synthetase N-terminal domain"/>
    <property type="match status" value="1"/>
</dbReference>
<dbReference type="Gene3D" id="3.40.50.620">
    <property type="entry name" value="HUPs"/>
    <property type="match status" value="1"/>
</dbReference>
<dbReference type="Gene3D" id="1.10.730.10">
    <property type="entry name" value="Isoleucyl-tRNA Synthetase, Domain 1"/>
    <property type="match status" value="1"/>
</dbReference>
<dbReference type="HAMAP" id="MF_00123">
    <property type="entry name" value="Arg_tRNA_synth"/>
    <property type="match status" value="1"/>
</dbReference>
<dbReference type="InterPro" id="IPR001412">
    <property type="entry name" value="aa-tRNA-synth_I_CS"/>
</dbReference>
<dbReference type="InterPro" id="IPR001278">
    <property type="entry name" value="Arg-tRNA-ligase"/>
</dbReference>
<dbReference type="InterPro" id="IPR005148">
    <property type="entry name" value="Arg-tRNA-synth_N"/>
</dbReference>
<dbReference type="InterPro" id="IPR036695">
    <property type="entry name" value="Arg-tRNA-synth_N_sf"/>
</dbReference>
<dbReference type="InterPro" id="IPR035684">
    <property type="entry name" value="ArgRS_core"/>
</dbReference>
<dbReference type="InterPro" id="IPR008909">
    <property type="entry name" value="DALR_anticod-bd"/>
</dbReference>
<dbReference type="InterPro" id="IPR014729">
    <property type="entry name" value="Rossmann-like_a/b/a_fold"/>
</dbReference>
<dbReference type="InterPro" id="IPR009080">
    <property type="entry name" value="tRNAsynth_Ia_anticodon-bd"/>
</dbReference>
<dbReference type="NCBIfam" id="TIGR00456">
    <property type="entry name" value="argS"/>
    <property type="match status" value="1"/>
</dbReference>
<dbReference type="PANTHER" id="PTHR11956:SF5">
    <property type="entry name" value="ARGININE--TRNA LIGASE, CYTOPLASMIC"/>
    <property type="match status" value="1"/>
</dbReference>
<dbReference type="PANTHER" id="PTHR11956">
    <property type="entry name" value="ARGINYL-TRNA SYNTHETASE"/>
    <property type="match status" value="1"/>
</dbReference>
<dbReference type="Pfam" id="PF03485">
    <property type="entry name" value="Arg_tRNA_synt_N"/>
    <property type="match status" value="1"/>
</dbReference>
<dbReference type="Pfam" id="PF05746">
    <property type="entry name" value="DALR_1"/>
    <property type="match status" value="1"/>
</dbReference>
<dbReference type="Pfam" id="PF00750">
    <property type="entry name" value="tRNA-synt_1d"/>
    <property type="match status" value="1"/>
</dbReference>
<dbReference type="PRINTS" id="PR01038">
    <property type="entry name" value="TRNASYNTHARG"/>
</dbReference>
<dbReference type="SMART" id="SM01016">
    <property type="entry name" value="Arg_tRNA_synt_N"/>
    <property type="match status" value="1"/>
</dbReference>
<dbReference type="SMART" id="SM00836">
    <property type="entry name" value="DALR_1"/>
    <property type="match status" value="1"/>
</dbReference>
<dbReference type="SUPFAM" id="SSF47323">
    <property type="entry name" value="Anticodon-binding domain of a subclass of class I aminoacyl-tRNA synthetases"/>
    <property type="match status" value="1"/>
</dbReference>
<dbReference type="SUPFAM" id="SSF55190">
    <property type="entry name" value="Arginyl-tRNA synthetase (ArgRS), N-terminal 'additional' domain"/>
    <property type="match status" value="1"/>
</dbReference>
<dbReference type="SUPFAM" id="SSF52374">
    <property type="entry name" value="Nucleotidylyl transferase"/>
    <property type="match status" value="1"/>
</dbReference>
<dbReference type="PROSITE" id="PS00178">
    <property type="entry name" value="AA_TRNA_LIGASE_I"/>
    <property type="match status" value="1"/>
</dbReference>
<accession>A4WQZ1</accession>
<comment type="catalytic activity">
    <reaction evidence="1">
        <text>tRNA(Arg) + L-arginine + ATP = L-arginyl-tRNA(Arg) + AMP + diphosphate</text>
        <dbReference type="Rhea" id="RHEA:20301"/>
        <dbReference type="Rhea" id="RHEA-COMP:9658"/>
        <dbReference type="Rhea" id="RHEA-COMP:9673"/>
        <dbReference type="ChEBI" id="CHEBI:30616"/>
        <dbReference type="ChEBI" id="CHEBI:32682"/>
        <dbReference type="ChEBI" id="CHEBI:33019"/>
        <dbReference type="ChEBI" id="CHEBI:78442"/>
        <dbReference type="ChEBI" id="CHEBI:78513"/>
        <dbReference type="ChEBI" id="CHEBI:456215"/>
        <dbReference type="EC" id="6.1.1.19"/>
    </reaction>
</comment>
<comment type="subunit">
    <text evidence="1">Monomer.</text>
</comment>
<comment type="subcellular location">
    <subcellularLocation>
        <location evidence="1">Cytoplasm</location>
    </subcellularLocation>
</comment>
<comment type="similarity">
    <text evidence="1">Belongs to the class-I aminoacyl-tRNA synthetase family.</text>
</comment>
<organism>
    <name type="scientific">Cereibacter sphaeroides (strain ATCC 17025 / ATH 2.4.3)</name>
    <name type="common">Rhodobacter sphaeroides</name>
    <dbReference type="NCBI Taxonomy" id="349102"/>
    <lineage>
        <taxon>Bacteria</taxon>
        <taxon>Pseudomonadati</taxon>
        <taxon>Pseudomonadota</taxon>
        <taxon>Alphaproteobacteria</taxon>
        <taxon>Rhodobacterales</taxon>
        <taxon>Paracoccaceae</taxon>
        <taxon>Cereibacter</taxon>
    </lineage>
</organism>
<sequence>MNLFTEIRSLVTAELGAMAEAGELPAGLDLSAVAVEPPRDPAHGDMATNAAMVLAKPAGKPPRAIAEALATRLAADPRILSAEVAGPGFLNLRLRPAVWQGLVARVLQAGDAYGRSTIGAGQRVNVEFVSANPTGPMHVGHVRGAVVGDALARLLVFAGWDVTREYYINDGGAQVDVLARSAYERYREAHGLEPEIREGLYPGDYLIPVGEALKAKYGDSLLDKGEHCWLTDVREFATEMMMQMIREDLAALGVEMDVYSSEKALYGTGKIEAALQRLQDMGLIYEGVLEPPKGKTPEDWEPREQTLFRSTAHGDDVDRPVKKSDGSWTYFAPDIAYHYDKVTRGFDQLIDIFGADHGGYVKRMKAAVAALSDGRVPLDIKLIQLVKLWKNGEPFKMSKRAGTYVTLRDVVEQVGADVTRFVMLTRKNDAALDFDFDKVLEQSKENPVFYVQYANARINSVLRKAREQGMDVADAALACADLDRLDHPAEIALIAKLAEWPRLVEIAARTNEPHRIAFYLHELSSDLHGLWNRGNDEPGLRFLQDDPVVSQAKIALARAVGVVICAGLGILGVTPVEEMR</sequence>
<protein>
    <recommendedName>
        <fullName evidence="1">Arginine--tRNA ligase</fullName>
        <ecNumber evidence="1">6.1.1.19</ecNumber>
    </recommendedName>
    <alternativeName>
        <fullName evidence="1">Arginyl-tRNA synthetase</fullName>
        <shortName evidence="1">ArgRS</shortName>
    </alternativeName>
</protein>
<feature type="chain" id="PRO_1000018102" description="Arginine--tRNA ligase">
    <location>
        <begin position="1"/>
        <end position="580"/>
    </location>
</feature>
<feature type="short sequence motif" description="'HIGH' region">
    <location>
        <begin position="131"/>
        <end position="141"/>
    </location>
</feature>
<proteinExistence type="inferred from homology"/>
<name>SYR_CERS5</name>